<protein>
    <recommendedName>
        <fullName>GTP-binding protein rho3</fullName>
    </recommendedName>
</protein>
<feature type="chain" id="PRO_0000198942" description="GTP-binding protein rho3">
    <location>
        <begin position="1"/>
        <end position="202"/>
    </location>
</feature>
<feature type="propeptide" id="PRO_0000281272" description="Removed in mature form" evidence="3">
    <location>
        <begin position="203"/>
        <end position="205"/>
    </location>
</feature>
<feature type="short sequence motif" description="Effector region">
    <location>
        <begin position="42"/>
        <end position="50"/>
    </location>
</feature>
<feature type="binding site" evidence="2">
    <location>
        <begin position="20"/>
        <end position="27"/>
    </location>
    <ligand>
        <name>GTP</name>
        <dbReference type="ChEBI" id="CHEBI:37565"/>
    </ligand>
</feature>
<feature type="binding site" evidence="1">
    <location>
        <begin position="67"/>
        <end position="71"/>
    </location>
    <ligand>
        <name>GTP</name>
        <dbReference type="ChEBI" id="CHEBI:37565"/>
    </ligand>
</feature>
<feature type="binding site" evidence="2">
    <location>
        <begin position="125"/>
        <end position="128"/>
    </location>
    <ligand>
        <name>GTP</name>
        <dbReference type="ChEBI" id="CHEBI:37565"/>
    </ligand>
</feature>
<feature type="modified residue" description="Cysteine methyl ester" evidence="3">
    <location>
        <position position="202"/>
    </location>
</feature>
<feature type="lipid moiety-binding region" description="S-geranylgeranyl cysteine" evidence="3">
    <location>
        <position position="202"/>
    </location>
</feature>
<feature type="mutagenesis site" description="Abnormal cell wall deposition." evidence="5">
    <original>G</original>
    <variation>V</variation>
    <location>
        <position position="25"/>
    </location>
</feature>
<feature type="mutagenesis site" description="Defective in cell separation." evidence="5">
    <original>T</original>
    <variation>N</variation>
    <location>
        <position position="27"/>
    </location>
</feature>
<evidence type="ECO:0000250" key="1">
    <source>
        <dbReference type="UniProtKB" id="P20171"/>
    </source>
</evidence>
<evidence type="ECO:0000250" key="2">
    <source>
        <dbReference type="UniProtKB" id="P61586"/>
    </source>
</evidence>
<evidence type="ECO:0000250" key="3">
    <source>
        <dbReference type="UniProtKB" id="P62745"/>
    </source>
</evidence>
<evidence type="ECO:0000269" key="4">
    <source>
    </source>
</evidence>
<evidence type="ECO:0000269" key="5">
    <source>
    </source>
</evidence>
<evidence type="ECO:0000269" key="6">
    <source>
    </source>
</evidence>
<evidence type="ECO:0000305" key="7"/>
<organism>
    <name type="scientific">Schizosaccharomyces pombe (strain 972 / ATCC 24843)</name>
    <name type="common">Fission yeast</name>
    <dbReference type="NCBI Taxonomy" id="284812"/>
    <lineage>
        <taxon>Eukaryota</taxon>
        <taxon>Fungi</taxon>
        <taxon>Dikarya</taxon>
        <taxon>Ascomycota</taxon>
        <taxon>Taphrinomycotina</taxon>
        <taxon>Schizosaccharomycetes</taxon>
        <taxon>Schizosaccharomycetales</taxon>
        <taxon>Schizosaccharomycetaceae</taxon>
        <taxon>Schizosaccharomyces</taxon>
    </lineage>
</organism>
<name>RHO3_SCHPO</name>
<sequence length="205" mass="22502">MSSCFGSKKKPIYRKIVILGDGAAGKTSLLNVFTKGYFPQVYEPTIFENYIHDIFVDGNSIELSLWDTAGQEEYDQLRSLSYSDTHVIMICFAVDSRDSLENVITKWLPEVSSNCPGVKLVLVALKCDLRGADEEQVDHSKIIDYEEGLAAAKKINAVRYLECSAKLNRGVNEAFTEAARVALAAQPRGTKDGADESHGTGCIIA</sequence>
<comment type="function">
    <text evidence="4 5 6">Involved in controlling cell shape and septation (PubMed:12415007). Regulates cell separation by modulating the function of the exocyst complex (PubMed:12930742). Involved in post-Golgi vesicle transport (PubMed:12930742). Involved in driving sexual development in a palmitoylation-dependent manner (PubMed:23843742).</text>
</comment>
<comment type="subunit">
    <text evidence="4">Interacts with for3.</text>
</comment>
<comment type="subcellular location">
    <subcellularLocation>
        <location evidence="4 5">Cell membrane</location>
        <topology evidence="4 5 6">Lipid-anchor</topology>
    </subcellularLocation>
    <text>Found at the cell periphery and the growing tips of interphase cells. Localized to the division site during cell division.</text>
</comment>
<comment type="developmental stage">
    <text evidence="6">Expressed during meiosis (at protein level).</text>
</comment>
<comment type="PTM">
    <text evidence="6">Palmitoylated by the erf2-erf4 complex.</text>
</comment>
<comment type="similarity">
    <text evidence="7">Belongs to the small GTPase superfamily. Rho family.</text>
</comment>
<proteinExistence type="evidence at protein level"/>
<keyword id="KW-0131">Cell cycle</keyword>
<keyword id="KW-0132">Cell division</keyword>
<keyword id="KW-1003">Cell membrane</keyword>
<keyword id="KW-0133">Cell shape</keyword>
<keyword id="KW-0342">GTP-binding</keyword>
<keyword id="KW-0449">Lipoprotein</keyword>
<keyword id="KW-0472">Membrane</keyword>
<keyword id="KW-0488">Methylation</keyword>
<keyword id="KW-0547">Nucleotide-binding</keyword>
<keyword id="KW-0636">Prenylation</keyword>
<keyword id="KW-1185">Reference proteome</keyword>
<accession>O13928</accession>
<gene>
    <name type="primary">rho3</name>
    <name type="ORF">SPAC23C4.08</name>
</gene>
<reference key="1">
    <citation type="journal article" date="2002" name="Nature">
        <title>The genome sequence of Schizosaccharomyces pombe.</title>
        <authorList>
            <person name="Wood V."/>
            <person name="Gwilliam R."/>
            <person name="Rajandream M.A."/>
            <person name="Lyne M.H."/>
            <person name="Lyne R."/>
            <person name="Stewart A."/>
            <person name="Sgouros J.G."/>
            <person name="Peat N."/>
            <person name="Hayles J."/>
            <person name="Baker S.G."/>
            <person name="Basham D."/>
            <person name="Bowman S."/>
            <person name="Brooks K."/>
            <person name="Brown D."/>
            <person name="Brown S."/>
            <person name="Chillingworth T."/>
            <person name="Churcher C.M."/>
            <person name="Collins M."/>
            <person name="Connor R."/>
            <person name="Cronin A."/>
            <person name="Davis P."/>
            <person name="Feltwell T."/>
            <person name="Fraser A."/>
            <person name="Gentles S."/>
            <person name="Goble A."/>
            <person name="Hamlin N."/>
            <person name="Harris D.E."/>
            <person name="Hidalgo J."/>
            <person name="Hodgson G."/>
            <person name="Holroyd S."/>
            <person name="Hornsby T."/>
            <person name="Howarth S."/>
            <person name="Huckle E.J."/>
            <person name="Hunt S."/>
            <person name="Jagels K."/>
            <person name="James K.D."/>
            <person name="Jones L."/>
            <person name="Jones M."/>
            <person name="Leather S."/>
            <person name="McDonald S."/>
            <person name="McLean J."/>
            <person name="Mooney P."/>
            <person name="Moule S."/>
            <person name="Mungall K.L."/>
            <person name="Murphy L.D."/>
            <person name="Niblett D."/>
            <person name="Odell C."/>
            <person name="Oliver K."/>
            <person name="O'Neil S."/>
            <person name="Pearson D."/>
            <person name="Quail M.A."/>
            <person name="Rabbinowitsch E."/>
            <person name="Rutherford K.M."/>
            <person name="Rutter S."/>
            <person name="Saunders D."/>
            <person name="Seeger K."/>
            <person name="Sharp S."/>
            <person name="Skelton J."/>
            <person name="Simmonds M.N."/>
            <person name="Squares R."/>
            <person name="Squares S."/>
            <person name="Stevens K."/>
            <person name="Taylor K."/>
            <person name="Taylor R.G."/>
            <person name="Tivey A."/>
            <person name="Walsh S.V."/>
            <person name="Warren T."/>
            <person name="Whitehead S."/>
            <person name="Woodward J.R."/>
            <person name="Volckaert G."/>
            <person name="Aert R."/>
            <person name="Robben J."/>
            <person name="Grymonprez B."/>
            <person name="Weltjens I."/>
            <person name="Vanstreels E."/>
            <person name="Rieger M."/>
            <person name="Schaefer M."/>
            <person name="Mueller-Auer S."/>
            <person name="Gabel C."/>
            <person name="Fuchs M."/>
            <person name="Duesterhoeft A."/>
            <person name="Fritzc C."/>
            <person name="Holzer E."/>
            <person name="Moestl D."/>
            <person name="Hilbert H."/>
            <person name="Borzym K."/>
            <person name="Langer I."/>
            <person name="Beck A."/>
            <person name="Lehrach H."/>
            <person name="Reinhardt R."/>
            <person name="Pohl T.M."/>
            <person name="Eger P."/>
            <person name="Zimmermann W."/>
            <person name="Wedler H."/>
            <person name="Wambutt R."/>
            <person name="Purnelle B."/>
            <person name="Goffeau A."/>
            <person name="Cadieu E."/>
            <person name="Dreano S."/>
            <person name="Gloux S."/>
            <person name="Lelaure V."/>
            <person name="Mottier S."/>
            <person name="Galibert F."/>
            <person name="Aves S.J."/>
            <person name="Xiang Z."/>
            <person name="Hunt C."/>
            <person name="Moore K."/>
            <person name="Hurst S.M."/>
            <person name="Lucas M."/>
            <person name="Rochet M."/>
            <person name="Gaillardin C."/>
            <person name="Tallada V.A."/>
            <person name="Garzon A."/>
            <person name="Thode G."/>
            <person name="Daga R.R."/>
            <person name="Cruzado L."/>
            <person name="Jimenez J."/>
            <person name="Sanchez M."/>
            <person name="del Rey F."/>
            <person name="Benito J."/>
            <person name="Dominguez A."/>
            <person name="Revuelta J.L."/>
            <person name="Moreno S."/>
            <person name="Armstrong J."/>
            <person name="Forsburg S.L."/>
            <person name="Cerutti L."/>
            <person name="Lowe T."/>
            <person name="McCombie W.R."/>
            <person name="Paulsen I."/>
            <person name="Potashkin J."/>
            <person name="Shpakovski G.V."/>
            <person name="Ussery D."/>
            <person name="Barrell B.G."/>
            <person name="Nurse P."/>
        </authorList>
    </citation>
    <scope>NUCLEOTIDE SEQUENCE [LARGE SCALE GENOMIC DNA]</scope>
    <source>
        <strain>972 / ATCC 24843</strain>
    </source>
</reference>
<reference key="2">
    <citation type="journal article" date="2002" name="J. Cell Sci.">
        <title>The small GTPase Rho3 and the diaphanous/formin For3 function in polarized cell growth in fission yeast.</title>
        <authorList>
            <person name="Nakano K."/>
            <person name="Imai J."/>
            <person name="Arai R."/>
            <person name="Toh-e A."/>
            <person name="Matsui Y."/>
            <person name="Mabuchi I."/>
        </authorList>
    </citation>
    <scope>FUNCTION</scope>
    <scope>INTERACTION WITH FOR3</scope>
    <scope>SUBCELLULAR LOCATION</scope>
</reference>
<reference key="3">
    <citation type="journal article" date="2003" name="Genetics">
        <title>Rho3p regulates cell separation by modulating exocyst function in Schizosaccharomyces pombe.</title>
        <authorList>
            <person name="Wang H."/>
            <person name="Tang X."/>
            <person name="Balasubramanian M.K."/>
        </authorList>
    </citation>
    <scope>FUNCTION</scope>
    <scope>SUBCELLULAR LOCATION</scope>
    <scope>MUTAGENESIS OF GLY-25 AND THR-27</scope>
</reference>
<reference key="4">
    <citation type="journal article" date="2013" name="PLoS Biol.">
        <title>Quantitative control of protein S-palmitoylation regulates meiotic entry in fission yeast.</title>
        <authorList>
            <person name="Zhang M.M."/>
            <person name="Wu P.Y."/>
            <person name="Kelly F.D."/>
            <person name="Nurse P."/>
            <person name="Hang H.C."/>
        </authorList>
    </citation>
    <scope>FUNCTION</scope>
    <scope>SUBCELLULAR LOCATION</scope>
    <scope>DEVELOPMENTAL STAGE</scope>
    <scope>PALMITOYLATION</scope>
</reference>
<dbReference type="EMBL" id="CU329670">
    <property type="protein sequence ID" value="CAD86888.1"/>
    <property type="molecule type" value="Genomic_DNA"/>
</dbReference>
<dbReference type="PIR" id="T38263">
    <property type="entry name" value="T38263"/>
</dbReference>
<dbReference type="RefSeq" id="NP_001018193.1">
    <property type="nucleotide sequence ID" value="NM_001018576.2"/>
</dbReference>
<dbReference type="SMR" id="O13928"/>
<dbReference type="BioGRID" id="280587">
    <property type="interactions" value="50"/>
</dbReference>
<dbReference type="FunCoup" id="O13928">
    <property type="interactions" value="391"/>
</dbReference>
<dbReference type="STRING" id="284812.O13928"/>
<dbReference type="iPTMnet" id="O13928"/>
<dbReference type="SwissPalm" id="O13928"/>
<dbReference type="PaxDb" id="4896-SPAC23C4.08.1"/>
<dbReference type="EnsemblFungi" id="SPAC23C4.08.1">
    <property type="protein sequence ID" value="SPAC23C4.08.1:pep"/>
    <property type="gene ID" value="SPAC23C4.08"/>
</dbReference>
<dbReference type="GeneID" id="3361511"/>
<dbReference type="KEGG" id="spo:3361511"/>
<dbReference type="PomBase" id="SPAC23C4.08">
    <property type="gene designation" value="rho3"/>
</dbReference>
<dbReference type="VEuPathDB" id="FungiDB:SPAC23C4.08"/>
<dbReference type="eggNOG" id="KOG0393">
    <property type="taxonomic scope" value="Eukaryota"/>
</dbReference>
<dbReference type="HOGENOM" id="CLU_041217_21_2_1"/>
<dbReference type="InParanoid" id="O13928"/>
<dbReference type="OMA" id="THTIMLC"/>
<dbReference type="PhylomeDB" id="O13928"/>
<dbReference type="Reactome" id="R-SPO-416482">
    <property type="pathway name" value="G alpha (12/13) signalling events"/>
</dbReference>
<dbReference type="Reactome" id="R-SPO-5625740">
    <property type="pathway name" value="RHO GTPases activate PKNs"/>
</dbReference>
<dbReference type="Reactome" id="R-SPO-6798695">
    <property type="pathway name" value="Neutrophil degranulation"/>
</dbReference>
<dbReference type="Reactome" id="R-SPO-9013026">
    <property type="pathway name" value="RHOB GTPase cycle"/>
</dbReference>
<dbReference type="Reactome" id="R-SPO-9013106">
    <property type="pathway name" value="RHOC GTPase cycle"/>
</dbReference>
<dbReference type="Reactome" id="R-SPO-9013405">
    <property type="pathway name" value="RHOD GTPase cycle"/>
</dbReference>
<dbReference type="Reactome" id="R-SPO-9035034">
    <property type="pathway name" value="RHOF GTPase cycle"/>
</dbReference>
<dbReference type="Reactome" id="R-SPO-9696264">
    <property type="pathway name" value="RND3 GTPase cycle"/>
</dbReference>
<dbReference type="Reactome" id="R-SPO-9696270">
    <property type="pathway name" value="RND2 GTPase cycle"/>
</dbReference>
<dbReference type="Reactome" id="R-SPO-9696273">
    <property type="pathway name" value="RND1 GTPase cycle"/>
</dbReference>
<dbReference type="PRO" id="PR:O13928"/>
<dbReference type="Proteomes" id="UP000002485">
    <property type="component" value="Chromosome I"/>
</dbReference>
<dbReference type="GO" id="GO:0032153">
    <property type="term" value="C:cell division site"/>
    <property type="evidence" value="ECO:0000314"/>
    <property type="project" value="PomBase"/>
</dbReference>
<dbReference type="GO" id="GO:0005829">
    <property type="term" value="C:cytosol"/>
    <property type="evidence" value="ECO:0007005"/>
    <property type="project" value="PomBase"/>
</dbReference>
<dbReference type="GO" id="GO:0005634">
    <property type="term" value="C:nucleus"/>
    <property type="evidence" value="ECO:0007005"/>
    <property type="project" value="PomBase"/>
</dbReference>
<dbReference type="GO" id="GO:0005886">
    <property type="term" value="C:plasma membrane"/>
    <property type="evidence" value="ECO:0000314"/>
    <property type="project" value="PomBase"/>
</dbReference>
<dbReference type="GO" id="GO:0005525">
    <property type="term" value="F:GTP binding"/>
    <property type="evidence" value="ECO:0000318"/>
    <property type="project" value="GO_Central"/>
</dbReference>
<dbReference type="GO" id="GO:0003924">
    <property type="term" value="F:GTPase activity"/>
    <property type="evidence" value="ECO:0000314"/>
    <property type="project" value="PomBase"/>
</dbReference>
<dbReference type="GO" id="GO:0019901">
    <property type="term" value="F:protein kinase binding"/>
    <property type="evidence" value="ECO:0000318"/>
    <property type="project" value="GO_Central"/>
</dbReference>
<dbReference type="GO" id="GO:0030036">
    <property type="term" value="P:actin cytoskeleton organization"/>
    <property type="evidence" value="ECO:0000315"/>
    <property type="project" value="PomBase"/>
</dbReference>
<dbReference type="GO" id="GO:0007015">
    <property type="term" value="P:actin filament organization"/>
    <property type="evidence" value="ECO:0000318"/>
    <property type="project" value="GO_Central"/>
</dbReference>
<dbReference type="GO" id="GO:0051301">
    <property type="term" value="P:cell division"/>
    <property type="evidence" value="ECO:0007669"/>
    <property type="project" value="UniProtKB-KW"/>
</dbReference>
<dbReference type="GO" id="GO:0007163">
    <property type="term" value="P:establishment or maintenance of cell polarity"/>
    <property type="evidence" value="ECO:0000315"/>
    <property type="project" value="PomBase"/>
</dbReference>
<dbReference type="GO" id="GO:0000226">
    <property type="term" value="P:microtubule cytoskeleton organization"/>
    <property type="evidence" value="ECO:0000315"/>
    <property type="project" value="PomBase"/>
</dbReference>
<dbReference type="GO" id="GO:0032956">
    <property type="term" value="P:regulation of actin cytoskeleton organization"/>
    <property type="evidence" value="ECO:0000318"/>
    <property type="project" value="GO_Central"/>
</dbReference>
<dbReference type="GO" id="GO:0008360">
    <property type="term" value="P:regulation of cell shape"/>
    <property type="evidence" value="ECO:0007669"/>
    <property type="project" value="UniProtKB-KW"/>
</dbReference>
<dbReference type="GO" id="GO:0017157">
    <property type="term" value="P:regulation of exocytosis"/>
    <property type="evidence" value="ECO:0000304"/>
    <property type="project" value="PomBase"/>
</dbReference>
<dbReference type="GO" id="GO:0010590">
    <property type="term" value="P:regulation of septum digestion after cytokinesis"/>
    <property type="evidence" value="ECO:0000315"/>
    <property type="project" value="PomBase"/>
</dbReference>
<dbReference type="GO" id="GO:0007165">
    <property type="term" value="P:signal transduction"/>
    <property type="evidence" value="ECO:0000318"/>
    <property type="project" value="GO_Central"/>
</dbReference>
<dbReference type="GO" id="GO:0007264">
    <property type="term" value="P:small GTPase-mediated signal transduction"/>
    <property type="evidence" value="ECO:0007669"/>
    <property type="project" value="InterPro"/>
</dbReference>
<dbReference type="CDD" id="cd04134">
    <property type="entry name" value="Rho3"/>
    <property type="match status" value="1"/>
</dbReference>
<dbReference type="FunFam" id="3.40.50.300:FF:000780">
    <property type="entry name" value="Rho GTPase Rho3"/>
    <property type="match status" value="1"/>
</dbReference>
<dbReference type="Gene3D" id="3.40.50.300">
    <property type="entry name" value="P-loop containing nucleotide triphosphate hydrolases"/>
    <property type="match status" value="1"/>
</dbReference>
<dbReference type="InterPro" id="IPR027417">
    <property type="entry name" value="P-loop_NTPase"/>
</dbReference>
<dbReference type="InterPro" id="IPR005225">
    <property type="entry name" value="Small_GTP-bd"/>
</dbReference>
<dbReference type="InterPro" id="IPR001806">
    <property type="entry name" value="Small_GTPase"/>
</dbReference>
<dbReference type="InterPro" id="IPR003578">
    <property type="entry name" value="Small_GTPase_Rho"/>
</dbReference>
<dbReference type="NCBIfam" id="TIGR00231">
    <property type="entry name" value="small_GTP"/>
    <property type="match status" value="1"/>
</dbReference>
<dbReference type="PANTHER" id="PTHR24072">
    <property type="entry name" value="RHO FAMILY GTPASE"/>
    <property type="match status" value="1"/>
</dbReference>
<dbReference type="Pfam" id="PF00071">
    <property type="entry name" value="Ras"/>
    <property type="match status" value="1"/>
</dbReference>
<dbReference type="PRINTS" id="PR00449">
    <property type="entry name" value="RASTRNSFRMNG"/>
</dbReference>
<dbReference type="SMART" id="SM00175">
    <property type="entry name" value="RAB"/>
    <property type="match status" value="1"/>
</dbReference>
<dbReference type="SMART" id="SM00176">
    <property type="entry name" value="RAN"/>
    <property type="match status" value="1"/>
</dbReference>
<dbReference type="SMART" id="SM00173">
    <property type="entry name" value="RAS"/>
    <property type="match status" value="1"/>
</dbReference>
<dbReference type="SMART" id="SM00174">
    <property type="entry name" value="RHO"/>
    <property type="match status" value="1"/>
</dbReference>
<dbReference type="SUPFAM" id="SSF52540">
    <property type="entry name" value="P-loop containing nucleoside triphosphate hydrolases"/>
    <property type="match status" value="1"/>
</dbReference>
<dbReference type="PROSITE" id="PS51420">
    <property type="entry name" value="RHO"/>
    <property type="match status" value="1"/>
</dbReference>